<reference key="1">
    <citation type="submission" date="2004-09" db="EMBL/GenBank/DDBJ databases">
        <authorList>
            <consortium name="NIH - Zebrafish Gene Collection (ZGC) project"/>
        </authorList>
    </citation>
    <scope>NUCLEOTIDE SEQUENCE [LARGE SCALE MRNA]</scope>
</reference>
<protein>
    <recommendedName>
        <fullName>Organic solute transporter subunit alpha</fullName>
        <shortName>OST-alpha</shortName>
    </recommendedName>
    <alternativeName>
        <fullName>Solute carrier family 51 subunit alpha</fullName>
    </alternativeName>
</protein>
<organism>
    <name type="scientific">Danio rerio</name>
    <name type="common">Zebrafish</name>
    <name type="synonym">Brachydanio rerio</name>
    <dbReference type="NCBI Taxonomy" id="7955"/>
    <lineage>
        <taxon>Eukaryota</taxon>
        <taxon>Metazoa</taxon>
        <taxon>Chordata</taxon>
        <taxon>Craniata</taxon>
        <taxon>Vertebrata</taxon>
        <taxon>Euteleostomi</taxon>
        <taxon>Actinopterygii</taxon>
        <taxon>Neopterygii</taxon>
        <taxon>Teleostei</taxon>
        <taxon>Ostariophysi</taxon>
        <taxon>Cypriniformes</taxon>
        <taxon>Danionidae</taxon>
        <taxon>Danioninae</taxon>
        <taxon>Danio</taxon>
    </lineage>
</organism>
<sequence length="326" mass="36589">METSNFTLFDPRCRAEAPFAIDAIKQLDIFGKVLYTVLTLMATASMLVFIEECIYIYKKVPAHKKSTIIWVTGVAPVMAIMSCLGMWVPRATMFTDMTSATYFAIVVFKFLILMIEEVGGDNAFLRRCEKQTFKISTGPCCCCCPCLPNVPITRRSLFILKLGSYQFALMKLVLTIFSIVLWTNGSFSLTNVSASGAAIWINSFIGVLTIIALWPVAIMFMHVREALRTLKIVPKYAMYQLVLILSQLQTAIINILALNGTIACSPPYSSQARGYMMSQQLLIVEMFIITLVTRVLYRRQYEPIPEPDDVEEKKTVLSSKKAIDVA</sequence>
<dbReference type="EMBL" id="BC081597">
    <property type="protein sequence ID" value="AAH81597.1"/>
    <property type="molecule type" value="mRNA"/>
</dbReference>
<dbReference type="RefSeq" id="NP_001004546.1">
    <property type="nucleotide sequence ID" value="NM_001004546.1"/>
</dbReference>
<dbReference type="SMR" id="Q66I08"/>
<dbReference type="FunCoup" id="Q66I08">
    <property type="interactions" value="1452"/>
</dbReference>
<dbReference type="STRING" id="7955.ENSDARP00000066630"/>
<dbReference type="GlyCosmos" id="Q66I08">
    <property type="glycosylation" value="4 sites, No reported glycans"/>
</dbReference>
<dbReference type="PaxDb" id="7955-ENSDARP00000066630"/>
<dbReference type="GeneID" id="447807"/>
<dbReference type="KEGG" id="dre:447807"/>
<dbReference type="AGR" id="ZFIN:ZDB-GENE-040912-10"/>
<dbReference type="CTD" id="200931"/>
<dbReference type="ZFIN" id="ZDB-GENE-040912-10">
    <property type="gene designation" value="slc51a"/>
</dbReference>
<dbReference type="eggNOG" id="ENOG502R3BX">
    <property type="taxonomic scope" value="Eukaryota"/>
</dbReference>
<dbReference type="InParanoid" id="Q66I08"/>
<dbReference type="OrthoDB" id="5832279at2759"/>
<dbReference type="PhylomeDB" id="Q66I08"/>
<dbReference type="PRO" id="PR:Q66I08"/>
<dbReference type="Proteomes" id="UP000000437">
    <property type="component" value="Chromosome 24"/>
</dbReference>
<dbReference type="GO" id="GO:0005789">
    <property type="term" value="C:endoplasmic reticulum membrane"/>
    <property type="evidence" value="ECO:0000250"/>
    <property type="project" value="UniProtKB"/>
</dbReference>
<dbReference type="GO" id="GO:0016020">
    <property type="term" value="C:membrane"/>
    <property type="evidence" value="ECO:0000250"/>
    <property type="project" value="UniProtKB"/>
</dbReference>
<dbReference type="GO" id="GO:0005886">
    <property type="term" value="C:plasma membrane"/>
    <property type="evidence" value="ECO:0000250"/>
    <property type="project" value="UniProtKB"/>
</dbReference>
<dbReference type="GO" id="GO:0032991">
    <property type="term" value="C:protein-containing complex"/>
    <property type="evidence" value="ECO:0000250"/>
    <property type="project" value="UniProtKB"/>
</dbReference>
<dbReference type="GO" id="GO:0046982">
    <property type="term" value="F:protein heterodimerization activity"/>
    <property type="evidence" value="ECO:0000250"/>
    <property type="project" value="UniProtKB"/>
</dbReference>
<dbReference type="GO" id="GO:0042803">
    <property type="term" value="F:protein homodimerization activity"/>
    <property type="evidence" value="ECO:0000250"/>
    <property type="project" value="UniProtKB"/>
</dbReference>
<dbReference type="GO" id="GO:0022857">
    <property type="term" value="F:transmembrane transporter activity"/>
    <property type="evidence" value="ECO:0000318"/>
    <property type="project" value="GO_Central"/>
</dbReference>
<dbReference type="GO" id="GO:0015721">
    <property type="term" value="P:bile acid and bile salt transport"/>
    <property type="evidence" value="ECO:0000250"/>
    <property type="project" value="UniProtKB"/>
</dbReference>
<dbReference type="InterPro" id="IPR005178">
    <property type="entry name" value="Ostalpha/TMEM184C"/>
</dbReference>
<dbReference type="PANTHER" id="PTHR23423">
    <property type="entry name" value="ORGANIC SOLUTE TRANSPORTER-RELATED"/>
    <property type="match status" value="1"/>
</dbReference>
<dbReference type="Pfam" id="PF03619">
    <property type="entry name" value="Solute_trans_a"/>
    <property type="match status" value="1"/>
</dbReference>
<dbReference type="SMART" id="SM01417">
    <property type="entry name" value="Solute_trans_a"/>
    <property type="match status" value="1"/>
</dbReference>
<accession>Q66I08</accession>
<evidence type="ECO:0000250" key="1"/>
<evidence type="ECO:0000250" key="2">
    <source>
        <dbReference type="UniProtKB" id="Q86UW1"/>
    </source>
</evidence>
<evidence type="ECO:0000250" key="3">
    <source>
        <dbReference type="UniProtKB" id="Q8R000"/>
    </source>
</evidence>
<evidence type="ECO:0000250" key="4">
    <source>
        <dbReference type="UniProtKB" id="Q90YM5"/>
    </source>
</evidence>
<evidence type="ECO:0000255" key="5"/>
<evidence type="ECO:0000305" key="6"/>
<keyword id="KW-1003">Cell membrane</keyword>
<keyword id="KW-0256">Endoplasmic reticulum</keyword>
<keyword id="KW-0325">Glycoprotein</keyword>
<keyword id="KW-0445">Lipid transport</keyword>
<keyword id="KW-0472">Membrane</keyword>
<keyword id="KW-1185">Reference proteome</keyword>
<keyword id="KW-0812">Transmembrane</keyword>
<keyword id="KW-1133">Transmembrane helix</keyword>
<keyword id="KW-0813">Transport</keyword>
<proteinExistence type="evidence at transcript level"/>
<feature type="chain" id="PRO_0000331545" description="Organic solute transporter subunit alpha">
    <location>
        <begin position="1"/>
        <end position="326"/>
    </location>
</feature>
<feature type="topological domain" description="Extracellular" evidence="5">
    <location>
        <begin position="1"/>
        <end position="28"/>
    </location>
</feature>
<feature type="transmembrane region" description="Helical" evidence="5">
    <location>
        <begin position="29"/>
        <end position="49"/>
    </location>
</feature>
<feature type="topological domain" description="Cytoplasmic" evidence="5">
    <location>
        <begin position="50"/>
        <end position="67"/>
    </location>
</feature>
<feature type="transmembrane region" description="Helical" evidence="5">
    <location>
        <begin position="68"/>
        <end position="88"/>
    </location>
</feature>
<feature type="topological domain" description="Extracellular" evidence="5">
    <location>
        <begin position="89"/>
        <end position="99"/>
    </location>
</feature>
<feature type="transmembrane region" description="Helical" evidence="5">
    <location>
        <begin position="100"/>
        <end position="120"/>
    </location>
</feature>
<feature type="topological domain" description="Cytoplasmic" evidence="5">
    <location>
        <begin position="121"/>
        <end position="161"/>
    </location>
</feature>
<feature type="transmembrane region" description="Helical" evidence="5">
    <location>
        <begin position="162"/>
        <end position="182"/>
    </location>
</feature>
<feature type="topological domain" description="Extracellular" evidence="5">
    <location>
        <begin position="183"/>
        <end position="198"/>
    </location>
</feature>
<feature type="transmembrane region" description="Helical" evidence="5">
    <location>
        <begin position="199"/>
        <end position="219"/>
    </location>
</feature>
<feature type="topological domain" description="Cytoplasmic" evidence="5">
    <location>
        <begin position="220"/>
        <end position="237"/>
    </location>
</feature>
<feature type="transmembrane region" description="Helical" evidence="5">
    <location>
        <begin position="238"/>
        <end position="258"/>
    </location>
</feature>
<feature type="topological domain" description="Extracellular" evidence="5">
    <location>
        <begin position="259"/>
        <end position="275"/>
    </location>
</feature>
<feature type="transmembrane region" description="Helical" evidence="5">
    <location>
        <begin position="276"/>
        <end position="296"/>
    </location>
</feature>
<feature type="topological domain" description="Cytoplasmic" evidence="5">
    <location>
        <begin position="297"/>
        <end position="326"/>
    </location>
</feature>
<feature type="glycosylation site" description="N-linked (GlcNAc...) asparagine" evidence="5">
    <location>
        <position position="5"/>
    </location>
</feature>
<feature type="glycosylation site" description="N-linked (GlcNAc...) asparagine" evidence="5">
    <location>
        <position position="184"/>
    </location>
</feature>
<feature type="glycosylation site" description="N-linked (GlcNAc...) asparagine" evidence="5">
    <location>
        <position position="191"/>
    </location>
</feature>
<feature type="glycosylation site" description="N-linked (GlcNAc...) asparagine" evidence="5">
    <location>
        <position position="259"/>
    </location>
</feature>
<gene>
    <name type="primary">slc51a</name>
    <name type="synonym">osta</name>
    <name type="ORF">zgc:92111</name>
</gene>
<name>OSTA_DANRE</name>
<comment type="function">
    <text evidence="4">Essential component of the Ost-alpha/Ost-beta complex, a heterodimer that acts as the intestinal basolateral transporter responsible for the translocation of bile acids (such as taurocholate), steroids (such as estrone sulfate), and eicosanoids (such as prostaglandin E2).</text>
</comment>
<comment type="catalytic activity">
    <reaction evidence="4">
        <text>taurocholate(out) = taurocholate(in)</text>
        <dbReference type="Rhea" id="RHEA:71703"/>
        <dbReference type="ChEBI" id="CHEBI:36257"/>
    </reaction>
</comment>
<comment type="catalytic activity">
    <reaction evidence="4">
        <text>prostaglandin E2(out) = prostaglandin E2(in)</text>
        <dbReference type="Rhea" id="RHEA:50984"/>
        <dbReference type="ChEBI" id="CHEBI:606564"/>
    </reaction>
</comment>
<comment type="catalytic activity">
    <reaction evidence="2">
        <text>estrone 3-sulfate(out) = estrone 3-sulfate(in)</text>
        <dbReference type="Rhea" id="RHEA:71835"/>
        <dbReference type="ChEBI" id="CHEBI:60050"/>
    </reaction>
</comment>
<comment type="catalytic activity">
    <reaction evidence="2">
        <text>dehydroepiandrosterone 3-sulfate(out) = dehydroepiandrosterone 3-sulfate(in)</text>
        <dbReference type="Rhea" id="RHEA:71839"/>
        <dbReference type="ChEBI" id="CHEBI:57905"/>
    </reaction>
</comment>
<comment type="catalytic activity">
    <reaction evidence="3">
        <text>tauroursodeoxycholate(out) = tauroursodeoxycholate(in)</text>
        <dbReference type="Rhea" id="RHEA:71843"/>
        <dbReference type="ChEBI" id="CHEBI:132028"/>
    </reaction>
</comment>
<comment type="catalytic activity">
    <reaction evidence="3">
        <text>glycoursodeoxycholate(out) = glycoursodeoxycholate(in)</text>
        <dbReference type="Rhea" id="RHEA:71847"/>
        <dbReference type="ChEBI" id="CHEBI:132030"/>
    </reaction>
</comment>
<comment type="catalytic activity">
    <reaction evidence="3">
        <text>glycocholate(out) = glycocholate(in)</text>
        <dbReference type="Rhea" id="RHEA:71851"/>
        <dbReference type="ChEBI" id="CHEBI:29746"/>
    </reaction>
</comment>
<comment type="catalytic activity">
    <reaction evidence="3">
        <text>taurochenodeoxycholate(out) = taurochenodeoxycholate(in)</text>
        <dbReference type="Rhea" id="RHEA:71855"/>
        <dbReference type="ChEBI" id="CHEBI:9407"/>
    </reaction>
</comment>
<comment type="catalytic activity">
    <reaction evidence="3">
        <text>glycochenodeoxycholate(out) = glycochenodeoxycholate(in)</text>
        <dbReference type="Rhea" id="RHEA:71859"/>
        <dbReference type="ChEBI" id="CHEBI:36252"/>
    </reaction>
</comment>
<comment type="catalytic activity">
    <reaction evidence="3">
        <text>taurodeoxycholate(out) = taurodeoxycholate(in)</text>
        <dbReference type="Rhea" id="RHEA:71863"/>
        <dbReference type="ChEBI" id="CHEBI:36261"/>
    </reaction>
</comment>
<comment type="catalytic activity">
    <reaction evidence="3">
        <text>glycodeoxycholate(out) = glycodeoxycholate(in)</text>
        <dbReference type="Rhea" id="RHEA:71867"/>
        <dbReference type="ChEBI" id="CHEBI:82982"/>
    </reaction>
</comment>
<comment type="subunit">
    <text evidence="1">Interacts with slc51b. The Ost-alpha/Ost-beta complex is a heterodimer composed of alpha (slc51a) and beta (slc51b) subunit (By similarity).</text>
</comment>
<comment type="subcellular location">
    <subcellularLocation>
        <location evidence="1">Cell membrane</location>
        <topology evidence="1">Multi-pass membrane protein</topology>
    </subcellularLocation>
    <subcellularLocation>
        <location>Endoplasmic reticulum membrane</location>
        <topology>Multi-pass membrane protein</topology>
    </subcellularLocation>
</comment>
<comment type="similarity">
    <text evidence="6">Belongs to the OST-alpha family.</text>
</comment>